<comment type="similarity">
    <text evidence="1">Belongs to the UPF0502 family.</text>
</comment>
<comment type="sequence caution" evidence="3">
    <conflict type="erroneous initiation">
        <sequence resource="EMBL-CDS" id="ABF80123"/>
    </conflict>
</comment>
<proteinExistence type="inferred from homology"/>
<protein>
    <recommendedName>
        <fullName evidence="1">UPF0502 protein Bcen_5249</fullName>
    </recommendedName>
</protein>
<sequence length="239" mass="26169">MNTTPDTPTPRALRELTPLEARILGVLVEKQHTVPDTYPLSLNALTAGCNQKTARAPVMNVSEDEVTTALDELKRLSLVMEGSSSRVPRFEHNMNRVLGIPSQAIALLTILLLRGPQTAAELRLNSARLHGFADISSVEAFLDELAARAAARRPAAACAGCAREPLDAPDVRRREHGRLRERGCRRRRGFGAAFRIRGAKGRTEAPRGRSGATQCAGSTDGERTRHRRRRTGRRVLIAS</sequence>
<dbReference type="EMBL" id="CP000379">
    <property type="protein sequence ID" value="ABF80123.1"/>
    <property type="status" value="ALT_INIT"/>
    <property type="molecule type" value="Genomic_DNA"/>
</dbReference>
<dbReference type="SMR" id="Q1BJT2"/>
<dbReference type="HOGENOM" id="CLU_902167_0_0_4"/>
<dbReference type="Gene3D" id="1.10.10.10">
    <property type="entry name" value="Winged helix-like DNA-binding domain superfamily/Winged helix DNA-binding domain"/>
    <property type="match status" value="2"/>
</dbReference>
<dbReference type="HAMAP" id="MF_01584">
    <property type="entry name" value="UPF0502"/>
    <property type="match status" value="1"/>
</dbReference>
<dbReference type="InterPro" id="IPR007432">
    <property type="entry name" value="DUF480"/>
</dbReference>
<dbReference type="InterPro" id="IPR036388">
    <property type="entry name" value="WH-like_DNA-bd_sf"/>
</dbReference>
<dbReference type="InterPro" id="IPR036390">
    <property type="entry name" value="WH_DNA-bd_sf"/>
</dbReference>
<dbReference type="PANTHER" id="PTHR38768">
    <property type="entry name" value="UPF0502 PROTEIN YCEH"/>
    <property type="match status" value="1"/>
</dbReference>
<dbReference type="PANTHER" id="PTHR38768:SF1">
    <property type="entry name" value="UPF0502 PROTEIN YCEH"/>
    <property type="match status" value="1"/>
</dbReference>
<dbReference type="Pfam" id="PF04337">
    <property type="entry name" value="DUF480"/>
    <property type="match status" value="1"/>
</dbReference>
<dbReference type="SUPFAM" id="SSF46785">
    <property type="entry name" value="Winged helix' DNA-binding domain"/>
    <property type="match status" value="2"/>
</dbReference>
<name>Y5249_BURO1</name>
<organism>
    <name type="scientific">Burkholderia orbicola (strain AU 1054)</name>
    <dbReference type="NCBI Taxonomy" id="331271"/>
    <lineage>
        <taxon>Bacteria</taxon>
        <taxon>Pseudomonadati</taxon>
        <taxon>Pseudomonadota</taxon>
        <taxon>Betaproteobacteria</taxon>
        <taxon>Burkholderiales</taxon>
        <taxon>Burkholderiaceae</taxon>
        <taxon>Burkholderia</taxon>
        <taxon>Burkholderia cepacia complex</taxon>
        <taxon>Burkholderia orbicola</taxon>
    </lineage>
</organism>
<accession>Q1BJT2</accession>
<reference key="1">
    <citation type="submission" date="2006-05" db="EMBL/GenBank/DDBJ databases">
        <title>Complete sequence of chromosome 2 of Burkholderia cenocepacia AU 1054.</title>
        <authorList>
            <consortium name="US DOE Joint Genome Institute"/>
            <person name="Copeland A."/>
            <person name="Lucas S."/>
            <person name="Lapidus A."/>
            <person name="Barry K."/>
            <person name="Detter J.C."/>
            <person name="Glavina del Rio T."/>
            <person name="Hammon N."/>
            <person name="Israni S."/>
            <person name="Dalin E."/>
            <person name="Tice H."/>
            <person name="Pitluck S."/>
            <person name="Chain P."/>
            <person name="Malfatti S."/>
            <person name="Shin M."/>
            <person name="Vergez L."/>
            <person name="Schmutz J."/>
            <person name="Larimer F."/>
            <person name="Land M."/>
            <person name="Hauser L."/>
            <person name="Kyrpides N."/>
            <person name="Lykidis A."/>
            <person name="LiPuma J.J."/>
            <person name="Konstantinidis K."/>
            <person name="Tiedje J.M."/>
            <person name="Richardson P."/>
        </authorList>
    </citation>
    <scope>NUCLEOTIDE SEQUENCE [LARGE SCALE GENOMIC DNA]</scope>
    <source>
        <strain>AU 1054</strain>
    </source>
</reference>
<evidence type="ECO:0000255" key="1">
    <source>
        <dbReference type="HAMAP-Rule" id="MF_01584"/>
    </source>
</evidence>
<evidence type="ECO:0000256" key="2">
    <source>
        <dbReference type="SAM" id="MobiDB-lite"/>
    </source>
</evidence>
<evidence type="ECO:0000305" key="3"/>
<gene>
    <name type="ordered locus">Bcen_5249</name>
</gene>
<feature type="chain" id="PRO_0000309372" description="UPF0502 protein Bcen_5249">
    <location>
        <begin position="1"/>
        <end position="239"/>
    </location>
</feature>
<feature type="region of interest" description="Disordered" evidence="2">
    <location>
        <begin position="196"/>
        <end position="239"/>
    </location>
</feature>
<feature type="compositionally biased region" description="Basic residues" evidence="2">
    <location>
        <begin position="224"/>
        <end position="233"/>
    </location>
</feature>